<evidence type="ECO:0000255" key="1">
    <source>
        <dbReference type="HAMAP-Rule" id="MF_01546"/>
    </source>
</evidence>
<evidence type="ECO:0000305" key="2"/>
<feature type="chain" id="PRO_0000215049" description="Protein AaeX">
    <location>
        <begin position="1"/>
        <end position="67"/>
    </location>
</feature>
<feature type="transmembrane region" description="Helical" evidence="1">
    <location>
        <begin position="3"/>
        <end position="23"/>
    </location>
</feature>
<feature type="transmembrane region" description="Helical" evidence="1">
    <location>
        <begin position="47"/>
        <end position="67"/>
    </location>
</feature>
<reference key="1">
    <citation type="journal article" date="2001" name="Nature">
        <title>Genome sequence of enterohaemorrhagic Escherichia coli O157:H7.</title>
        <authorList>
            <person name="Perna N.T."/>
            <person name="Plunkett G. III"/>
            <person name="Burland V."/>
            <person name="Mau B."/>
            <person name="Glasner J.D."/>
            <person name="Rose D.J."/>
            <person name="Mayhew G.F."/>
            <person name="Evans P.S."/>
            <person name="Gregor J."/>
            <person name="Kirkpatrick H.A."/>
            <person name="Posfai G."/>
            <person name="Hackett J."/>
            <person name="Klink S."/>
            <person name="Boutin A."/>
            <person name="Shao Y."/>
            <person name="Miller L."/>
            <person name="Grotbeck E.J."/>
            <person name="Davis N.W."/>
            <person name="Lim A."/>
            <person name="Dimalanta E.T."/>
            <person name="Potamousis K."/>
            <person name="Apodaca J."/>
            <person name="Anantharaman T.S."/>
            <person name="Lin J."/>
            <person name="Yen G."/>
            <person name="Schwartz D.C."/>
            <person name="Welch R.A."/>
            <person name="Blattner F.R."/>
        </authorList>
    </citation>
    <scope>NUCLEOTIDE SEQUENCE [LARGE SCALE GENOMIC DNA]</scope>
    <source>
        <strain>O157:H7 / EDL933 / ATCC 700927 / EHEC</strain>
    </source>
</reference>
<reference key="2">
    <citation type="journal article" date="2001" name="DNA Res.">
        <title>Complete genome sequence of enterohemorrhagic Escherichia coli O157:H7 and genomic comparison with a laboratory strain K-12.</title>
        <authorList>
            <person name="Hayashi T."/>
            <person name="Makino K."/>
            <person name="Ohnishi M."/>
            <person name="Kurokawa K."/>
            <person name="Ishii K."/>
            <person name="Yokoyama K."/>
            <person name="Han C.-G."/>
            <person name="Ohtsubo E."/>
            <person name="Nakayama K."/>
            <person name="Murata T."/>
            <person name="Tanaka M."/>
            <person name="Tobe T."/>
            <person name="Iida T."/>
            <person name="Takami H."/>
            <person name="Honda T."/>
            <person name="Sasakawa C."/>
            <person name="Ogasawara N."/>
            <person name="Yasunaga T."/>
            <person name="Kuhara S."/>
            <person name="Shiba T."/>
            <person name="Hattori M."/>
            <person name="Shinagawa H."/>
        </authorList>
    </citation>
    <scope>NUCLEOTIDE SEQUENCE [LARGE SCALE GENOMIC DNA]</scope>
    <source>
        <strain>O157:H7 / Sakai / RIMD 0509952 / EHEC</strain>
    </source>
</reference>
<proteinExistence type="inferred from homology"/>
<organism>
    <name type="scientific">Escherichia coli O157:H7</name>
    <dbReference type="NCBI Taxonomy" id="83334"/>
    <lineage>
        <taxon>Bacteria</taxon>
        <taxon>Pseudomonadati</taxon>
        <taxon>Pseudomonadota</taxon>
        <taxon>Gammaproteobacteria</taxon>
        <taxon>Enterobacterales</taxon>
        <taxon>Enterobacteriaceae</taxon>
        <taxon>Escherichia</taxon>
    </lineage>
</organism>
<name>AAEX_ECO57</name>
<keyword id="KW-1003">Cell membrane</keyword>
<keyword id="KW-0472">Membrane</keyword>
<keyword id="KW-1185">Reference proteome</keyword>
<keyword id="KW-0812">Transmembrane</keyword>
<keyword id="KW-1133">Transmembrane helix</keyword>
<comment type="subcellular location">
    <subcellularLocation>
        <location evidence="1">Cell membrane</location>
        <topology evidence="1">Multi-pass membrane protein</topology>
    </subcellularLocation>
</comment>
<comment type="induction">
    <text evidence="1">Positively coregulated with aaeA and aaeB by AaeR.</text>
</comment>
<comment type="similarity">
    <text evidence="1">Belongs to the AaeX family.</text>
</comment>
<comment type="sequence caution" evidence="2">
    <conflict type="erroneous initiation">
        <sequence resource="EMBL-CDS" id="AAG58370"/>
    </conflict>
    <text>Extended N-terminus.</text>
</comment>
<dbReference type="EMBL" id="AE005174">
    <property type="protein sequence ID" value="AAG58370.1"/>
    <property type="status" value="ALT_INIT"/>
    <property type="molecule type" value="Genomic_DNA"/>
</dbReference>
<dbReference type="EMBL" id="BA000007">
    <property type="protein sequence ID" value="BAB37538.2"/>
    <property type="molecule type" value="Genomic_DNA"/>
</dbReference>
<dbReference type="PIR" id="C91143">
    <property type="entry name" value="C91143"/>
</dbReference>
<dbReference type="PIR" id="F85988">
    <property type="entry name" value="F85988"/>
</dbReference>
<dbReference type="RefSeq" id="WP_001310167.1">
    <property type="nucleotide sequence ID" value="NZ_VOAI01000014.1"/>
</dbReference>
<dbReference type="STRING" id="155864.Z4601"/>
<dbReference type="KEGG" id="ece:Z4601"/>
<dbReference type="KEGG" id="ecs:ECs_4115"/>
<dbReference type="PATRIC" id="fig|386585.9.peg.4296"/>
<dbReference type="eggNOG" id="ENOG5032YJX">
    <property type="taxonomic scope" value="Bacteria"/>
</dbReference>
<dbReference type="HOGENOM" id="CLU_188292_0_0_6"/>
<dbReference type="OMA" id="IYDLVWH"/>
<dbReference type="Proteomes" id="UP000000558">
    <property type="component" value="Chromosome"/>
</dbReference>
<dbReference type="Proteomes" id="UP000002519">
    <property type="component" value="Chromosome"/>
</dbReference>
<dbReference type="GO" id="GO:0005886">
    <property type="term" value="C:plasma membrane"/>
    <property type="evidence" value="ECO:0007669"/>
    <property type="project" value="UniProtKB-SubCell"/>
</dbReference>
<dbReference type="HAMAP" id="MF_01546">
    <property type="entry name" value="AaeX"/>
    <property type="match status" value="1"/>
</dbReference>
<dbReference type="InterPro" id="IPR012451">
    <property type="entry name" value="DUF1656"/>
</dbReference>
<dbReference type="NCBIfam" id="NF008615">
    <property type="entry name" value="PRK11594.1"/>
    <property type="match status" value="1"/>
</dbReference>
<dbReference type="Pfam" id="PF07869">
    <property type="entry name" value="DUF1656"/>
    <property type="match status" value="1"/>
</dbReference>
<sequence length="67" mass="7794">MSLFPVIVVFGLSFPPIFFELLLSLAIFWLVCRVLVPTGIYDFVWHPALFNTALYCCLFYLISRLFV</sequence>
<protein>
    <recommendedName>
        <fullName evidence="1">Protein AaeX</fullName>
    </recommendedName>
</protein>
<accession>Q8X9E0</accession>
<accession>Q7AAF9</accession>
<gene>
    <name evidence="1" type="primary">aaeX</name>
    <name type="ordered locus">Z4601</name>
    <name type="ordered locus">ECs4115</name>
</gene>